<reference key="1">
    <citation type="submission" date="1997-09" db="EMBL/GenBank/DDBJ databases">
        <authorList>
            <person name="Boves H."/>
            <person name="Mintert U."/>
            <person name="Dittrich W."/>
            <person name="Faix J."/>
            <person name="Gerisch G."/>
        </authorList>
    </citation>
    <scope>NUCLEOTIDE SEQUENCE [MRNA]</scope>
    <source>
        <strain>AX3</strain>
    </source>
</reference>
<reference key="2">
    <citation type="journal article" date="2002" name="Nature">
        <title>Sequence and analysis of chromosome 2 of Dictyostelium discoideum.</title>
        <authorList>
            <person name="Gloeckner G."/>
            <person name="Eichinger L."/>
            <person name="Szafranski K."/>
            <person name="Pachebat J.A."/>
            <person name="Bankier A.T."/>
            <person name="Dear P.H."/>
            <person name="Lehmann R."/>
            <person name="Baumgart C."/>
            <person name="Parra G."/>
            <person name="Abril J.F."/>
            <person name="Guigo R."/>
            <person name="Kumpf K."/>
            <person name="Tunggal B."/>
            <person name="Cox E.C."/>
            <person name="Quail M.A."/>
            <person name="Platzer M."/>
            <person name="Rosenthal A."/>
            <person name="Noegel A.A."/>
        </authorList>
    </citation>
    <scope>NUCLEOTIDE SEQUENCE [LARGE SCALE GENOMIC DNA]</scope>
    <source>
        <strain>AX4</strain>
    </source>
</reference>
<reference key="3">
    <citation type="journal article" date="2005" name="Nature">
        <title>The genome of the social amoeba Dictyostelium discoideum.</title>
        <authorList>
            <person name="Eichinger L."/>
            <person name="Pachebat J.A."/>
            <person name="Gloeckner G."/>
            <person name="Rajandream M.A."/>
            <person name="Sucgang R."/>
            <person name="Berriman M."/>
            <person name="Song J."/>
            <person name="Olsen R."/>
            <person name="Szafranski K."/>
            <person name="Xu Q."/>
            <person name="Tunggal B."/>
            <person name="Kummerfeld S."/>
            <person name="Madera M."/>
            <person name="Konfortov B.A."/>
            <person name="Rivero F."/>
            <person name="Bankier A.T."/>
            <person name="Lehmann R."/>
            <person name="Hamlin N."/>
            <person name="Davies R."/>
            <person name="Gaudet P."/>
            <person name="Fey P."/>
            <person name="Pilcher K."/>
            <person name="Chen G."/>
            <person name="Saunders D."/>
            <person name="Sodergren E.J."/>
            <person name="Davis P."/>
            <person name="Kerhornou A."/>
            <person name="Nie X."/>
            <person name="Hall N."/>
            <person name="Anjard C."/>
            <person name="Hemphill L."/>
            <person name="Bason N."/>
            <person name="Farbrother P."/>
            <person name="Desany B."/>
            <person name="Just E."/>
            <person name="Morio T."/>
            <person name="Rost R."/>
            <person name="Churcher C.M."/>
            <person name="Cooper J."/>
            <person name="Haydock S."/>
            <person name="van Driessche N."/>
            <person name="Cronin A."/>
            <person name="Goodhead I."/>
            <person name="Muzny D.M."/>
            <person name="Mourier T."/>
            <person name="Pain A."/>
            <person name="Lu M."/>
            <person name="Harper D."/>
            <person name="Lindsay R."/>
            <person name="Hauser H."/>
            <person name="James K.D."/>
            <person name="Quiles M."/>
            <person name="Madan Babu M."/>
            <person name="Saito T."/>
            <person name="Buchrieser C."/>
            <person name="Wardroper A."/>
            <person name="Felder M."/>
            <person name="Thangavelu M."/>
            <person name="Johnson D."/>
            <person name="Knights A."/>
            <person name="Loulseged H."/>
            <person name="Mungall K.L."/>
            <person name="Oliver K."/>
            <person name="Price C."/>
            <person name="Quail M.A."/>
            <person name="Urushihara H."/>
            <person name="Hernandez J."/>
            <person name="Rabbinowitsch E."/>
            <person name="Steffen D."/>
            <person name="Sanders M."/>
            <person name="Ma J."/>
            <person name="Kohara Y."/>
            <person name="Sharp S."/>
            <person name="Simmonds M.N."/>
            <person name="Spiegler S."/>
            <person name="Tivey A."/>
            <person name="Sugano S."/>
            <person name="White B."/>
            <person name="Walker D."/>
            <person name="Woodward J.R."/>
            <person name="Winckler T."/>
            <person name="Tanaka Y."/>
            <person name="Shaulsky G."/>
            <person name="Schleicher M."/>
            <person name="Weinstock G.M."/>
            <person name="Rosenthal A."/>
            <person name="Cox E.C."/>
            <person name="Chisholm R.L."/>
            <person name="Gibbs R.A."/>
            <person name="Loomis W.F."/>
            <person name="Platzer M."/>
            <person name="Kay R.R."/>
            <person name="Williams J.G."/>
            <person name="Dear P.H."/>
            <person name="Noegel A.A."/>
            <person name="Barrell B.G."/>
            <person name="Kuspa A."/>
        </authorList>
    </citation>
    <scope>NUCLEOTIDE SEQUENCE [LARGE SCALE GENOMIC DNA]</scope>
    <source>
        <strain>AX4</strain>
    </source>
</reference>
<reference key="4">
    <citation type="journal article" date="2006" name="J. Proteome Res.">
        <title>Identification of novel centrosomal proteins in Dictyostelium discoideum by comparative proteomic approaches.</title>
        <authorList>
            <person name="Reinders Y."/>
            <person name="Schulz I."/>
            <person name="Graef R."/>
            <person name="Sickmann A."/>
        </authorList>
    </citation>
    <scope>IDENTIFICATION BY MASS SPECTROMETRY [LARGE SCALE ANALYSIS]</scope>
</reference>
<reference key="5">
    <citation type="journal article" date="2006" name="Mol. Cell. Proteomics">
        <title>Proteomics fingerprinting of phagosome maturation and evidence for the role of a Galpha during uptake.</title>
        <authorList>
            <person name="Gotthardt D."/>
            <person name="Blancheteau V."/>
            <person name="Bosserhoff A."/>
            <person name="Ruppert T."/>
            <person name="Delorenzi M."/>
            <person name="Soldati T."/>
        </authorList>
    </citation>
    <scope>IDENTIFICATION BY MASS SPECTROMETRY [LARGE SCALE ANALYSIS]</scope>
    <source>
        <strain>AX2</strain>
    </source>
</reference>
<reference key="6">
    <citation type="journal article" date="2007" name="Microbiology">
        <title>A new environmentally resistant cell type from Dictyostelium.</title>
        <authorList>
            <person name="Serafimidis I."/>
            <person name="Bloomfield G."/>
            <person name="Skelton J."/>
            <person name="Ivens A."/>
            <person name="Kay R.R."/>
        </authorList>
    </citation>
    <scope>DEVELOPMENTAL STAGE</scope>
</reference>
<organism>
    <name type="scientific">Dictyostelium discoideum</name>
    <name type="common">Social amoeba</name>
    <dbReference type="NCBI Taxonomy" id="44689"/>
    <lineage>
        <taxon>Eukaryota</taxon>
        <taxon>Amoebozoa</taxon>
        <taxon>Evosea</taxon>
        <taxon>Eumycetozoa</taxon>
        <taxon>Dictyostelia</taxon>
        <taxon>Dictyosteliales</taxon>
        <taxon>Dictyosteliaceae</taxon>
        <taxon>Dictyostelium</taxon>
    </lineage>
</organism>
<dbReference type="EMBL" id="AF025951">
    <property type="protein sequence ID" value="AAB81865.1"/>
    <property type="molecule type" value="mRNA"/>
</dbReference>
<dbReference type="EMBL" id="AAFI02000011">
    <property type="protein sequence ID" value="EAL70502.1"/>
    <property type="molecule type" value="Genomic_DNA"/>
</dbReference>
<dbReference type="EMBL" id="AAFI02000009">
    <property type="protein sequence ID" value="EAL70842.1"/>
    <property type="molecule type" value="Genomic_DNA"/>
</dbReference>
<dbReference type="PIR" id="T45471">
    <property type="entry name" value="T45471"/>
</dbReference>
<dbReference type="RefSeq" id="XP_644428.1">
    <property type="nucleotide sequence ID" value="XM_639336.1"/>
</dbReference>
<dbReference type="RefSeq" id="XP_644822.1">
    <property type="nucleotide sequence ID" value="XM_639730.1"/>
</dbReference>
<dbReference type="SMR" id="Q557E0"/>
<dbReference type="FunCoup" id="Q557E0">
    <property type="interactions" value="490"/>
</dbReference>
<dbReference type="IntAct" id="Q557E0">
    <property type="interactions" value="1"/>
</dbReference>
<dbReference type="STRING" id="44689.Q557E0"/>
<dbReference type="PaxDb" id="44689-DDB0185047"/>
<dbReference type="EnsemblProtists" id="EAL70502">
    <property type="protein sequence ID" value="EAL70502"/>
    <property type="gene ID" value="DDB_G0273623"/>
</dbReference>
<dbReference type="EnsemblProtists" id="EAL70842">
    <property type="protein sequence ID" value="EAL70842"/>
    <property type="gene ID" value="DDB_G0273249"/>
</dbReference>
<dbReference type="GeneID" id="8618924"/>
<dbReference type="GeneID" id="8619053"/>
<dbReference type="KEGG" id="ddi:DDB_G0273249"/>
<dbReference type="KEGG" id="ddi:DDB_G0273623"/>
<dbReference type="dictyBase" id="DDB_G0273249">
    <property type="gene designation" value="hspE-1"/>
</dbReference>
<dbReference type="dictyBase" id="DDB_G0273623">
    <property type="gene designation" value="hspE-2"/>
</dbReference>
<dbReference type="VEuPathDB" id="AmoebaDB:DDB_G0273623"/>
<dbReference type="eggNOG" id="KOG0101">
    <property type="taxonomic scope" value="Eukaryota"/>
</dbReference>
<dbReference type="HOGENOM" id="CLU_005965_3_0_1"/>
<dbReference type="InParanoid" id="Q557E0"/>
<dbReference type="OMA" id="SYAYNIK"/>
<dbReference type="PhylomeDB" id="Q557E0"/>
<dbReference type="Reactome" id="R-DDI-3371453">
    <property type="pathway name" value="Regulation of HSF1-mediated heat shock response"/>
</dbReference>
<dbReference type="Reactome" id="R-DDI-3371497">
    <property type="pathway name" value="HSP90 chaperone cycle for steroid hormone receptors (SHR) in the presence of ligand"/>
</dbReference>
<dbReference type="Reactome" id="R-DDI-3371571">
    <property type="pathway name" value="HSF1-dependent transactivation"/>
</dbReference>
<dbReference type="Reactome" id="R-DDI-450408">
    <property type="pathway name" value="AUF1 (hnRNP D0) binds and destabilizes mRNA"/>
</dbReference>
<dbReference type="Reactome" id="R-DDI-6798695">
    <property type="pathway name" value="Neutrophil degranulation"/>
</dbReference>
<dbReference type="Reactome" id="R-DDI-9841251">
    <property type="pathway name" value="Mitochondrial unfolded protein response (UPRmt)"/>
</dbReference>
<dbReference type="PRO" id="PR:Q557E0"/>
<dbReference type="Proteomes" id="UP000002195">
    <property type="component" value="Chromosome 2"/>
</dbReference>
<dbReference type="GO" id="GO:0005813">
    <property type="term" value="C:centrosome"/>
    <property type="evidence" value="ECO:0007669"/>
    <property type="project" value="UniProtKB-SubCell"/>
</dbReference>
<dbReference type="GO" id="GO:0005737">
    <property type="term" value="C:cytoplasm"/>
    <property type="evidence" value="ECO:0000318"/>
    <property type="project" value="GO_Central"/>
</dbReference>
<dbReference type="GO" id="GO:0005811">
    <property type="term" value="C:lipid droplet"/>
    <property type="evidence" value="ECO:0007005"/>
    <property type="project" value="dictyBase"/>
</dbReference>
<dbReference type="GO" id="GO:0045335">
    <property type="term" value="C:phagocytic vesicle"/>
    <property type="evidence" value="ECO:0007005"/>
    <property type="project" value="dictyBase"/>
</dbReference>
<dbReference type="GO" id="GO:0005524">
    <property type="term" value="F:ATP binding"/>
    <property type="evidence" value="ECO:0007669"/>
    <property type="project" value="UniProtKB-KW"/>
</dbReference>
<dbReference type="GO" id="GO:0016887">
    <property type="term" value="F:ATP hydrolysis activity"/>
    <property type="evidence" value="ECO:0000318"/>
    <property type="project" value="GO_Central"/>
</dbReference>
<dbReference type="GO" id="GO:0140662">
    <property type="term" value="F:ATP-dependent protein folding chaperone"/>
    <property type="evidence" value="ECO:0007669"/>
    <property type="project" value="InterPro"/>
</dbReference>
<dbReference type="GO" id="GO:0031072">
    <property type="term" value="F:heat shock protein binding"/>
    <property type="evidence" value="ECO:0000318"/>
    <property type="project" value="GO_Central"/>
</dbReference>
<dbReference type="GO" id="GO:0044183">
    <property type="term" value="F:protein folding chaperone"/>
    <property type="evidence" value="ECO:0000318"/>
    <property type="project" value="GO_Central"/>
</dbReference>
<dbReference type="GO" id="GO:0051085">
    <property type="term" value="P:chaperone cofactor-dependent protein refolding"/>
    <property type="evidence" value="ECO:0000318"/>
    <property type="project" value="GO_Central"/>
</dbReference>
<dbReference type="GO" id="GO:0042026">
    <property type="term" value="P:protein refolding"/>
    <property type="evidence" value="ECO:0000318"/>
    <property type="project" value="GO_Central"/>
</dbReference>
<dbReference type="GO" id="GO:0009617">
    <property type="term" value="P:response to bacterium"/>
    <property type="evidence" value="ECO:0007007"/>
    <property type="project" value="dictyBase"/>
</dbReference>
<dbReference type="CDD" id="cd10233">
    <property type="entry name" value="ASKHA_NBD_HSP70_HSPA1"/>
    <property type="match status" value="1"/>
</dbReference>
<dbReference type="FunFam" id="2.60.34.10:FF:000002">
    <property type="entry name" value="Heat shock 70 kDa"/>
    <property type="match status" value="1"/>
</dbReference>
<dbReference type="FunFam" id="3.30.420.40:FF:000172">
    <property type="entry name" value="Heat shock 70 kDa protein"/>
    <property type="match status" value="2"/>
</dbReference>
<dbReference type="FunFam" id="3.30.30.30:FF:000001">
    <property type="entry name" value="heat shock 70 kDa protein-like"/>
    <property type="match status" value="1"/>
</dbReference>
<dbReference type="FunFam" id="1.20.1270.10:FF:000068">
    <property type="entry name" value="Heat shock cognate 70 kDa protein 2"/>
    <property type="match status" value="1"/>
</dbReference>
<dbReference type="FunFam" id="3.90.640.10:FF:000134">
    <property type="entry name" value="Heat shock cognate 71 kDa protein"/>
    <property type="match status" value="1"/>
</dbReference>
<dbReference type="FunFam" id="3.30.420.40:FF:000026">
    <property type="entry name" value="Heat shock protein 70"/>
    <property type="match status" value="1"/>
</dbReference>
<dbReference type="Gene3D" id="1.20.1270.10">
    <property type="match status" value="1"/>
</dbReference>
<dbReference type="Gene3D" id="3.30.30.30">
    <property type="match status" value="1"/>
</dbReference>
<dbReference type="Gene3D" id="3.30.420.40">
    <property type="match status" value="2"/>
</dbReference>
<dbReference type="Gene3D" id="3.90.640.10">
    <property type="entry name" value="Actin, Chain A, domain 4"/>
    <property type="match status" value="1"/>
</dbReference>
<dbReference type="Gene3D" id="2.60.34.10">
    <property type="entry name" value="Substrate Binding Domain Of DNAk, Chain A, domain 1"/>
    <property type="match status" value="1"/>
</dbReference>
<dbReference type="InterPro" id="IPR043129">
    <property type="entry name" value="ATPase_NBD"/>
</dbReference>
<dbReference type="InterPro" id="IPR018181">
    <property type="entry name" value="Heat_shock_70_CS"/>
</dbReference>
<dbReference type="InterPro" id="IPR029048">
    <property type="entry name" value="HSP70_C_sf"/>
</dbReference>
<dbReference type="InterPro" id="IPR029047">
    <property type="entry name" value="HSP70_peptide-bd_sf"/>
</dbReference>
<dbReference type="InterPro" id="IPR013126">
    <property type="entry name" value="Hsp_70_fam"/>
</dbReference>
<dbReference type="NCBIfam" id="NF001413">
    <property type="entry name" value="PRK00290.1"/>
    <property type="match status" value="1"/>
</dbReference>
<dbReference type="PANTHER" id="PTHR19375">
    <property type="entry name" value="HEAT SHOCK PROTEIN 70KDA"/>
    <property type="match status" value="1"/>
</dbReference>
<dbReference type="Pfam" id="PF00012">
    <property type="entry name" value="HSP70"/>
    <property type="match status" value="1"/>
</dbReference>
<dbReference type="PRINTS" id="PR00301">
    <property type="entry name" value="HEATSHOCK70"/>
</dbReference>
<dbReference type="SUPFAM" id="SSF53067">
    <property type="entry name" value="Actin-like ATPase domain"/>
    <property type="match status" value="2"/>
</dbReference>
<dbReference type="SUPFAM" id="SSF100934">
    <property type="entry name" value="Heat shock protein 70kD (HSP70), C-terminal subdomain"/>
    <property type="match status" value="1"/>
</dbReference>
<dbReference type="SUPFAM" id="SSF100920">
    <property type="entry name" value="Heat shock protein 70kD (HSP70), peptide-binding domain"/>
    <property type="match status" value="1"/>
</dbReference>
<dbReference type="PROSITE" id="PS00297">
    <property type="entry name" value="HSP70_1"/>
    <property type="match status" value="1"/>
</dbReference>
<dbReference type="PROSITE" id="PS00329">
    <property type="entry name" value="HSP70_2"/>
    <property type="match status" value="1"/>
</dbReference>
<dbReference type="PROSITE" id="PS01036">
    <property type="entry name" value="HSP70_3"/>
    <property type="match status" value="1"/>
</dbReference>
<comment type="function">
    <text evidence="1">May function in protein folding and assembly, and disassembly of protein complexes.</text>
</comment>
<comment type="subcellular location">
    <subcellularLocation>
        <location>Cytoplasm</location>
        <location>Cytoskeleton</location>
        <location>Microtubule organizing center</location>
        <location>Centrosome</location>
    </subcellularLocation>
</comment>
<comment type="developmental stage">
    <text evidence="3">Up-regulated in aspidocytes, a resistant cell type induced from amoebae by a range of toxins including heavy metals and antibiotics.</text>
</comment>
<comment type="similarity">
    <text evidence="4">Belongs to the heat shock protein 70 family.</text>
</comment>
<comment type="caution">
    <text evidence="4">The gene for this protein is duplicated in strains AX3 and AX4. These strains contain a duplication of a segment of 750 kb of chromosome 2 compared to the corresponding sequence in strain AX2.</text>
</comment>
<evidence type="ECO:0000250" key="1"/>
<evidence type="ECO:0000256" key="2">
    <source>
        <dbReference type="SAM" id="MobiDB-lite"/>
    </source>
</evidence>
<evidence type="ECO:0000269" key="3">
    <source>
    </source>
</evidence>
<evidence type="ECO:0000305" key="4"/>
<gene>
    <name type="primary">hspE-1</name>
    <name type="ORF">DDB_G0273249</name>
</gene>
<gene>
    <name type="primary">hspE-2</name>
    <name type="ORF">DDB_G0273623</name>
</gene>
<keyword id="KW-0067">ATP-binding</keyword>
<keyword id="KW-0143">Chaperone</keyword>
<keyword id="KW-0963">Cytoplasm</keyword>
<keyword id="KW-0206">Cytoskeleton</keyword>
<keyword id="KW-0547">Nucleotide-binding</keyword>
<keyword id="KW-1185">Reference proteome</keyword>
<keyword id="KW-0346">Stress response</keyword>
<accession>Q557E0</accession>
<accession>O15766</accession>
<accession>Q869V7</accession>
<protein>
    <recommendedName>
        <fullName>Heat shock cognate 70 kDa protein 2</fullName>
        <shortName>HSC70-2</shortName>
    </recommendedName>
</protein>
<proteinExistence type="evidence at protein level"/>
<sequence length="632" mass="69790">MSSSIGIDLGTTYSCVGVWQNDRVEIIANDQGNRTTPSYVAFNETERLIGDAAKNQVAMNPTNTIFDAKRLIGRKFSDPVIQSDMKHWPFKVIAKEGDKPHLQVEFKGEVKTFSPEEVSSMVLLKMKETAEAYLGKTINNAVITVPAYFNDSQRQATKDAGAIAKLNVQRIINEPTAAAIAYGLEKKSQGERNILIFDLGGGTFDVSLLTIEDGVFEVKATAGDTHLGGEDFDNRLVNHFVDEFKRKHKKDLMTNQRALRRLRTACERAKRTLSSSAQASIEIDSLFEGIDFYTSITRARFEELCADLFRGCLDPVDKVLKDSKLDKKTIHEIVLVGGSTRIPKVQQLLQDHFNGKELNKSINPDEAVAYGAAVQAAILSNEGGAKVADILLLDVAPLSMGLETAGGVMTTLIPRNTTIPCKKNQTFSTYSDNQTGVLVQVYEGERAMTRDNNLLGKFELTNIPPAPRGVPQIEVTFDIDANGILNVSAEDKSTGNKHKITITNDKGRLTAEQIEKMVKDAEMFKAQDEAQREVVESKNKLENYAYTVRSTIKDDKIAAKLSKEDRKTVEEKSDEAINWLHANDSATKEEYEKAMKDLEAVCSPIISKVYGQQGGENPGNFSGAKTTEEDLD</sequence>
<name>HS7C2_DICDI</name>
<feature type="chain" id="PRO_0000327971" description="Heat shock cognate 70 kDa protein 2">
    <location>
        <begin position="1"/>
        <end position="632"/>
    </location>
</feature>
<feature type="region of interest" description="Disordered" evidence="2">
    <location>
        <begin position="609"/>
        <end position="632"/>
    </location>
</feature>
<feature type="sequence conflict" description="In Ref. 1; AAB81865." evidence="4" ref="1">
    <original>K</original>
    <variation>N</variation>
    <location>
        <position position="219"/>
    </location>
</feature>
<feature type="sequence conflict" description="In Ref. 1; AAB81865." evidence="4" ref="1">
    <original>L</original>
    <variation>H</variation>
    <location>
        <position position="259"/>
    </location>
</feature>